<gene>
    <name evidence="1" type="primary">mnmG</name>
    <name evidence="1" type="synonym">gidA</name>
    <name type="ordered locus">CHU_3502</name>
</gene>
<feature type="chain" id="PRO_1000016588" description="tRNA uridine 5-carboxymethylaminomethyl modification enzyme MnmG">
    <location>
        <begin position="1"/>
        <end position="621"/>
    </location>
</feature>
<feature type="binding site" evidence="1">
    <location>
        <begin position="11"/>
        <end position="16"/>
    </location>
    <ligand>
        <name>FAD</name>
        <dbReference type="ChEBI" id="CHEBI:57692"/>
    </ligand>
</feature>
<feature type="binding site" evidence="1">
    <location>
        <begin position="271"/>
        <end position="285"/>
    </location>
    <ligand>
        <name>NAD(+)</name>
        <dbReference type="ChEBI" id="CHEBI:57540"/>
    </ligand>
</feature>
<organism>
    <name type="scientific">Cytophaga hutchinsonii (strain ATCC 33406 / DSM 1761 / CIP 103989 / NBRC 15051 / NCIMB 9469 / D465)</name>
    <dbReference type="NCBI Taxonomy" id="269798"/>
    <lineage>
        <taxon>Bacteria</taxon>
        <taxon>Pseudomonadati</taxon>
        <taxon>Bacteroidota</taxon>
        <taxon>Cytophagia</taxon>
        <taxon>Cytophagales</taxon>
        <taxon>Cytophagaceae</taxon>
        <taxon>Cytophaga</taxon>
    </lineage>
</organism>
<keyword id="KW-0963">Cytoplasm</keyword>
<keyword id="KW-0274">FAD</keyword>
<keyword id="KW-0285">Flavoprotein</keyword>
<keyword id="KW-0520">NAD</keyword>
<keyword id="KW-1185">Reference proteome</keyword>
<keyword id="KW-0819">tRNA processing</keyword>
<name>MNMG_CYTH3</name>
<accession>Q11PC8</accession>
<dbReference type="EMBL" id="CP000383">
    <property type="protein sequence ID" value="ABG60735.1"/>
    <property type="molecule type" value="Genomic_DNA"/>
</dbReference>
<dbReference type="RefSeq" id="WP_011586842.1">
    <property type="nucleotide sequence ID" value="NC_008255.1"/>
</dbReference>
<dbReference type="SMR" id="Q11PC8"/>
<dbReference type="STRING" id="269798.CHU_3502"/>
<dbReference type="KEGG" id="chu:CHU_3502"/>
<dbReference type="eggNOG" id="COG0445">
    <property type="taxonomic scope" value="Bacteria"/>
</dbReference>
<dbReference type="HOGENOM" id="CLU_007831_2_2_10"/>
<dbReference type="OrthoDB" id="9815560at2"/>
<dbReference type="Proteomes" id="UP000001822">
    <property type="component" value="Chromosome"/>
</dbReference>
<dbReference type="GO" id="GO:0005829">
    <property type="term" value="C:cytosol"/>
    <property type="evidence" value="ECO:0007669"/>
    <property type="project" value="TreeGrafter"/>
</dbReference>
<dbReference type="GO" id="GO:0050660">
    <property type="term" value="F:flavin adenine dinucleotide binding"/>
    <property type="evidence" value="ECO:0007669"/>
    <property type="project" value="UniProtKB-UniRule"/>
</dbReference>
<dbReference type="GO" id="GO:0030488">
    <property type="term" value="P:tRNA methylation"/>
    <property type="evidence" value="ECO:0007669"/>
    <property type="project" value="TreeGrafter"/>
</dbReference>
<dbReference type="GO" id="GO:0002098">
    <property type="term" value="P:tRNA wobble uridine modification"/>
    <property type="evidence" value="ECO:0007669"/>
    <property type="project" value="InterPro"/>
</dbReference>
<dbReference type="FunFam" id="1.10.150.570:FF:000001">
    <property type="entry name" value="tRNA uridine 5-carboxymethylaminomethyl modification enzyme MnmG"/>
    <property type="match status" value="1"/>
</dbReference>
<dbReference type="FunFam" id="3.50.50.60:FF:000002">
    <property type="entry name" value="tRNA uridine 5-carboxymethylaminomethyl modification enzyme MnmG"/>
    <property type="match status" value="1"/>
</dbReference>
<dbReference type="Gene3D" id="3.50.50.60">
    <property type="entry name" value="FAD/NAD(P)-binding domain"/>
    <property type="match status" value="2"/>
</dbReference>
<dbReference type="Gene3D" id="1.10.150.570">
    <property type="entry name" value="GidA associated domain, C-terminal subdomain"/>
    <property type="match status" value="1"/>
</dbReference>
<dbReference type="Gene3D" id="1.10.10.1800">
    <property type="entry name" value="tRNA uridine 5-carboxymethylaminomethyl modification enzyme MnmG/GidA"/>
    <property type="match status" value="1"/>
</dbReference>
<dbReference type="HAMAP" id="MF_00129">
    <property type="entry name" value="MnmG_GidA"/>
    <property type="match status" value="1"/>
</dbReference>
<dbReference type="InterPro" id="IPR036188">
    <property type="entry name" value="FAD/NAD-bd_sf"/>
</dbReference>
<dbReference type="InterPro" id="IPR049312">
    <property type="entry name" value="GIDA_C_N"/>
</dbReference>
<dbReference type="InterPro" id="IPR004416">
    <property type="entry name" value="MnmG"/>
</dbReference>
<dbReference type="InterPro" id="IPR002218">
    <property type="entry name" value="MnmG-rel"/>
</dbReference>
<dbReference type="InterPro" id="IPR020595">
    <property type="entry name" value="MnmG-rel_CS"/>
</dbReference>
<dbReference type="InterPro" id="IPR026904">
    <property type="entry name" value="MnmG_C"/>
</dbReference>
<dbReference type="InterPro" id="IPR047001">
    <property type="entry name" value="MnmG_C_subdom"/>
</dbReference>
<dbReference type="InterPro" id="IPR044920">
    <property type="entry name" value="MnmG_C_subdom_sf"/>
</dbReference>
<dbReference type="InterPro" id="IPR040131">
    <property type="entry name" value="MnmG_N"/>
</dbReference>
<dbReference type="NCBIfam" id="TIGR00136">
    <property type="entry name" value="mnmG_gidA"/>
    <property type="match status" value="1"/>
</dbReference>
<dbReference type="PANTHER" id="PTHR11806">
    <property type="entry name" value="GLUCOSE INHIBITED DIVISION PROTEIN A"/>
    <property type="match status" value="1"/>
</dbReference>
<dbReference type="PANTHER" id="PTHR11806:SF0">
    <property type="entry name" value="PROTEIN MTO1 HOMOLOG, MITOCHONDRIAL"/>
    <property type="match status" value="1"/>
</dbReference>
<dbReference type="Pfam" id="PF01134">
    <property type="entry name" value="GIDA"/>
    <property type="match status" value="1"/>
</dbReference>
<dbReference type="Pfam" id="PF21680">
    <property type="entry name" value="GIDA_C_1st"/>
    <property type="match status" value="1"/>
</dbReference>
<dbReference type="Pfam" id="PF13932">
    <property type="entry name" value="SAM_GIDA_C"/>
    <property type="match status" value="1"/>
</dbReference>
<dbReference type="SMART" id="SM01228">
    <property type="entry name" value="GIDA_assoc_3"/>
    <property type="match status" value="1"/>
</dbReference>
<dbReference type="SUPFAM" id="SSF51905">
    <property type="entry name" value="FAD/NAD(P)-binding domain"/>
    <property type="match status" value="1"/>
</dbReference>
<dbReference type="PROSITE" id="PS01280">
    <property type="entry name" value="GIDA_1"/>
    <property type="match status" value="1"/>
</dbReference>
<dbReference type="PROSITE" id="PS01281">
    <property type="entry name" value="GIDA_2"/>
    <property type="match status" value="1"/>
</dbReference>
<sequence length="621" mass="69569">MFPEYDVIVVGAGHAGCEAAAAAANMGSKVLLATMNMQTIAQMSCNPAMGGVAKGQIVREIDALGGLSGIVSDKSMIQFRMLNRSKGPAMWSPRSQNDRHMFAWEWRMQLEALPNVDFWQEMISGLIVKNGKVCGVRTGLGIEIPCKSVVLTNGTFLNGIIHIGEKKLGGGRTGEKAATGITEQLVELGFESGRMKTGTPPRVDGRSLDYSVMQEQEGDENPSKFSYSKQTTSLTKQRSCHITYTNQAVHDTLKEGFDRSPMFTGRIKGLGPRYCPSVEDKINRFAEKERHQIFVEPEGWNTVEVYVNGFSTSLPEDVQYKAIRKIAGFENAKMFRPGYAIEYDFFPPTQLQLSLETRLVKNLFFAGQINGTTGYEEAACQGLMAGINAHKAAKDHEALILKRSEAYIGVLIDDLVNKGTEEPYRMFTSRAEYRILLRQDNADLRLTPIGYEIGLATEERYQDMLLKKHNSEKLVEEIKNTKIKPETANEILEENGSAPIKEKVVLYNLLKRPNMEVSLFAEKVEEIKTLIEPYTQEEIEQAMIEVKYRDYIDKEEQMALKMTQLENMALNPDFDYKKIQALSLEAREKLSKLKPATLGQASRISGVNPADISILMIYMGR</sequence>
<proteinExistence type="inferred from homology"/>
<comment type="function">
    <text evidence="1">NAD-binding protein involved in the addition of a carboxymethylaminomethyl (cmnm) group at the wobble position (U34) of certain tRNAs, forming tRNA-cmnm(5)s(2)U34.</text>
</comment>
<comment type="cofactor">
    <cofactor evidence="1">
        <name>FAD</name>
        <dbReference type="ChEBI" id="CHEBI:57692"/>
    </cofactor>
</comment>
<comment type="subunit">
    <text evidence="1">Homodimer. Heterotetramer of two MnmE and two MnmG subunits.</text>
</comment>
<comment type="subcellular location">
    <subcellularLocation>
        <location evidence="1">Cytoplasm</location>
    </subcellularLocation>
</comment>
<comment type="similarity">
    <text evidence="1">Belongs to the MnmG family.</text>
</comment>
<evidence type="ECO:0000255" key="1">
    <source>
        <dbReference type="HAMAP-Rule" id="MF_00129"/>
    </source>
</evidence>
<protein>
    <recommendedName>
        <fullName evidence="1">tRNA uridine 5-carboxymethylaminomethyl modification enzyme MnmG</fullName>
    </recommendedName>
    <alternativeName>
        <fullName evidence="1">Glucose-inhibited division protein A</fullName>
    </alternativeName>
</protein>
<reference key="1">
    <citation type="journal article" date="2007" name="Appl. Environ. Microbiol.">
        <title>Genome sequence of the cellulolytic gliding bacterium Cytophaga hutchinsonii.</title>
        <authorList>
            <person name="Xie G."/>
            <person name="Bruce D.C."/>
            <person name="Challacombe J.F."/>
            <person name="Chertkov O."/>
            <person name="Detter J.C."/>
            <person name="Gilna P."/>
            <person name="Han C.S."/>
            <person name="Lucas S."/>
            <person name="Misra M."/>
            <person name="Myers G.L."/>
            <person name="Richardson P."/>
            <person name="Tapia R."/>
            <person name="Thayer N."/>
            <person name="Thompson L.S."/>
            <person name="Brettin T.S."/>
            <person name="Henrissat B."/>
            <person name="Wilson D.B."/>
            <person name="McBride M.J."/>
        </authorList>
    </citation>
    <scope>NUCLEOTIDE SEQUENCE [LARGE SCALE GENOMIC DNA]</scope>
    <source>
        <strain>ATCC 33406 / DSM 1761 / JCM 20678 / CIP 103989 / IAM 12607 / NBRC 15051 / NCIMB 9469 / D465</strain>
    </source>
</reference>